<comment type="catalytic activity">
    <reaction evidence="1">
        <text>2-formamido-N(1)-(5-O-phospho-beta-D-ribosyl)acetamidine + ATP = 5-amino-1-(5-phospho-beta-D-ribosyl)imidazole + ADP + phosphate + H(+)</text>
        <dbReference type="Rhea" id="RHEA:23032"/>
        <dbReference type="ChEBI" id="CHEBI:15378"/>
        <dbReference type="ChEBI" id="CHEBI:30616"/>
        <dbReference type="ChEBI" id="CHEBI:43474"/>
        <dbReference type="ChEBI" id="CHEBI:137981"/>
        <dbReference type="ChEBI" id="CHEBI:147287"/>
        <dbReference type="ChEBI" id="CHEBI:456216"/>
        <dbReference type="EC" id="6.3.3.1"/>
    </reaction>
</comment>
<comment type="pathway">
    <text evidence="1">Purine metabolism; IMP biosynthesis via de novo pathway; 5-amino-1-(5-phospho-D-ribosyl)imidazole from N(2)-formyl-N(1)-(5-phospho-D-ribosyl)glycinamide: step 2/2.</text>
</comment>
<comment type="subcellular location">
    <subcellularLocation>
        <location evidence="1">Cytoplasm</location>
    </subcellularLocation>
</comment>
<comment type="similarity">
    <text evidence="1">Belongs to the AIR synthase family.</text>
</comment>
<sequence length="357" mass="36671">MSQSGKNGLTYSDAGVDIDAGNLLVQKIKPAVRSTRRPGADGEIGGFGGLFDLKAAGFADPVLVAANDGVGTKLKIAIDADYHDTVGIDLVAMCVNDLVVQGAEPLFFLDYFATGKLDPDQGAAIVGGIAAGCRQAGCALIGGETAEMPGMYSSGDYDLAGFAVGAAERGKLLPSGDIAEGDVILGLASSGVHSNGFSLVRKIVELSGLGWDAPAPFAEGRKLGEALLEPTRIYVKPLLKAIRETGALKALAHITGGGFPENIPRVLPKHLAAEIDLAAVKVPPVFSWLARTGGVEAKEMLRTFNCGIGMIVVVAEENVAAVSQALEAEGEKVVTLGRMIARAEGAAGTVYKGTLAI</sequence>
<dbReference type="EC" id="6.3.3.1" evidence="1"/>
<dbReference type="EMBL" id="CP001074">
    <property type="protein sequence ID" value="ACE90534.1"/>
    <property type="molecule type" value="Genomic_DNA"/>
</dbReference>
<dbReference type="SMR" id="B3PV93"/>
<dbReference type="KEGG" id="rec:RHECIAT_CH0001556"/>
<dbReference type="eggNOG" id="COG0150">
    <property type="taxonomic scope" value="Bacteria"/>
</dbReference>
<dbReference type="HOGENOM" id="CLU_047116_0_0_5"/>
<dbReference type="UniPathway" id="UPA00074">
    <property type="reaction ID" value="UER00129"/>
</dbReference>
<dbReference type="Proteomes" id="UP000008817">
    <property type="component" value="Chromosome"/>
</dbReference>
<dbReference type="GO" id="GO:0005829">
    <property type="term" value="C:cytosol"/>
    <property type="evidence" value="ECO:0007669"/>
    <property type="project" value="TreeGrafter"/>
</dbReference>
<dbReference type="GO" id="GO:0005524">
    <property type="term" value="F:ATP binding"/>
    <property type="evidence" value="ECO:0007669"/>
    <property type="project" value="UniProtKB-KW"/>
</dbReference>
<dbReference type="GO" id="GO:0004637">
    <property type="term" value="F:phosphoribosylamine-glycine ligase activity"/>
    <property type="evidence" value="ECO:0007669"/>
    <property type="project" value="TreeGrafter"/>
</dbReference>
<dbReference type="GO" id="GO:0004641">
    <property type="term" value="F:phosphoribosylformylglycinamidine cyclo-ligase activity"/>
    <property type="evidence" value="ECO:0007669"/>
    <property type="project" value="UniProtKB-UniRule"/>
</dbReference>
<dbReference type="GO" id="GO:0006189">
    <property type="term" value="P:'de novo' IMP biosynthetic process"/>
    <property type="evidence" value="ECO:0007669"/>
    <property type="project" value="UniProtKB-UniRule"/>
</dbReference>
<dbReference type="GO" id="GO:0046084">
    <property type="term" value="P:adenine biosynthetic process"/>
    <property type="evidence" value="ECO:0007669"/>
    <property type="project" value="TreeGrafter"/>
</dbReference>
<dbReference type="CDD" id="cd02196">
    <property type="entry name" value="PurM"/>
    <property type="match status" value="1"/>
</dbReference>
<dbReference type="FunFam" id="3.30.1330.10:FF:000001">
    <property type="entry name" value="Phosphoribosylformylglycinamidine cyclo-ligase"/>
    <property type="match status" value="1"/>
</dbReference>
<dbReference type="FunFam" id="3.90.650.10:FF:000019">
    <property type="entry name" value="Trifunctional purine biosynthetic protein adenosine-3"/>
    <property type="match status" value="1"/>
</dbReference>
<dbReference type="Gene3D" id="3.90.650.10">
    <property type="entry name" value="PurM-like C-terminal domain"/>
    <property type="match status" value="1"/>
</dbReference>
<dbReference type="Gene3D" id="3.30.1330.10">
    <property type="entry name" value="PurM-like, N-terminal domain"/>
    <property type="match status" value="1"/>
</dbReference>
<dbReference type="HAMAP" id="MF_00741">
    <property type="entry name" value="AIRS"/>
    <property type="match status" value="1"/>
</dbReference>
<dbReference type="InterPro" id="IPR010918">
    <property type="entry name" value="PurM-like_C_dom"/>
</dbReference>
<dbReference type="InterPro" id="IPR036676">
    <property type="entry name" value="PurM-like_C_sf"/>
</dbReference>
<dbReference type="InterPro" id="IPR016188">
    <property type="entry name" value="PurM-like_N"/>
</dbReference>
<dbReference type="InterPro" id="IPR036921">
    <property type="entry name" value="PurM-like_N_sf"/>
</dbReference>
<dbReference type="InterPro" id="IPR004733">
    <property type="entry name" value="PurM_cligase"/>
</dbReference>
<dbReference type="NCBIfam" id="TIGR00878">
    <property type="entry name" value="purM"/>
    <property type="match status" value="1"/>
</dbReference>
<dbReference type="PANTHER" id="PTHR10520:SF12">
    <property type="entry name" value="TRIFUNCTIONAL PURINE BIOSYNTHETIC PROTEIN ADENOSINE-3"/>
    <property type="match status" value="1"/>
</dbReference>
<dbReference type="PANTHER" id="PTHR10520">
    <property type="entry name" value="TRIFUNCTIONAL PURINE BIOSYNTHETIC PROTEIN ADENOSINE-3-RELATED"/>
    <property type="match status" value="1"/>
</dbReference>
<dbReference type="Pfam" id="PF00586">
    <property type="entry name" value="AIRS"/>
    <property type="match status" value="1"/>
</dbReference>
<dbReference type="Pfam" id="PF02769">
    <property type="entry name" value="AIRS_C"/>
    <property type="match status" value="1"/>
</dbReference>
<dbReference type="SUPFAM" id="SSF56042">
    <property type="entry name" value="PurM C-terminal domain-like"/>
    <property type="match status" value="1"/>
</dbReference>
<dbReference type="SUPFAM" id="SSF55326">
    <property type="entry name" value="PurM N-terminal domain-like"/>
    <property type="match status" value="1"/>
</dbReference>
<evidence type="ECO:0000255" key="1">
    <source>
        <dbReference type="HAMAP-Rule" id="MF_00741"/>
    </source>
</evidence>
<accession>B3PV93</accession>
<keyword id="KW-0067">ATP-binding</keyword>
<keyword id="KW-0963">Cytoplasm</keyword>
<keyword id="KW-0436">Ligase</keyword>
<keyword id="KW-0547">Nucleotide-binding</keyword>
<keyword id="KW-0658">Purine biosynthesis</keyword>
<feature type="chain" id="PRO_1000193037" description="Phosphoribosylformylglycinamidine cyclo-ligase">
    <location>
        <begin position="1"/>
        <end position="357"/>
    </location>
</feature>
<gene>
    <name evidence="1" type="primary">purM</name>
    <name type="ordered locus">RHECIAT_CH0001556</name>
</gene>
<name>PUR5_RHIE6</name>
<organism>
    <name type="scientific">Rhizobium etli (strain CIAT 652)</name>
    <dbReference type="NCBI Taxonomy" id="491916"/>
    <lineage>
        <taxon>Bacteria</taxon>
        <taxon>Pseudomonadati</taxon>
        <taxon>Pseudomonadota</taxon>
        <taxon>Alphaproteobacteria</taxon>
        <taxon>Hyphomicrobiales</taxon>
        <taxon>Rhizobiaceae</taxon>
        <taxon>Rhizobium/Agrobacterium group</taxon>
        <taxon>Rhizobium</taxon>
    </lineage>
</organism>
<proteinExistence type="inferred from homology"/>
<protein>
    <recommendedName>
        <fullName evidence="1">Phosphoribosylformylglycinamidine cyclo-ligase</fullName>
        <ecNumber evidence="1">6.3.3.1</ecNumber>
    </recommendedName>
    <alternativeName>
        <fullName evidence="1">AIR synthase</fullName>
    </alternativeName>
    <alternativeName>
        <fullName evidence="1">AIRS</fullName>
    </alternativeName>
    <alternativeName>
        <fullName evidence="1">Phosphoribosyl-aminoimidazole synthetase</fullName>
    </alternativeName>
</protein>
<reference key="1">
    <citation type="journal article" date="2010" name="Appl. Environ. Microbiol.">
        <title>Conserved symbiotic plasmid DNA sequences in the multireplicon pangenomic structure of Rhizobium etli.</title>
        <authorList>
            <person name="Gonzalez V."/>
            <person name="Acosta J.L."/>
            <person name="Santamaria R.I."/>
            <person name="Bustos P."/>
            <person name="Fernandez J.L."/>
            <person name="Hernandez Gonzalez I.L."/>
            <person name="Diaz R."/>
            <person name="Flores M."/>
            <person name="Palacios R."/>
            <person name="Mora J."/>
            <person name="Davila G."/>
        </authorList>
    </citation>
    <scope>NUCLEOTIDE SEQUENCE [LARGE SCALE GENOMIC DNA]</scope>
    <source>
        <strain>CIAT 652</strain>
    </source>
</reference>